<proteinExistence type="inferred from homology"/>
<dbReference type="EC" id="3.1.11.6" evidence="1"/>
<dbReference type="EMBL" id="AM295007">
    <property type="protein sequence ID" value="CAM29955.1"/>
    <property type="molecule type" value="Genomic_DNA"/>
</dbReference>
<dbReference type="RefSeq" id="WP_011017997.1">
    <property type="nucleotide sequence ID" value="NC_009332.1"/>
</dbReference>
<dbReference type="SMR" id="A2RDN0"/>
<dbReference type="KEGG" id="spf:SpyM50620"/>
<dbReference type="HOGENOM" id="CLU_023625_3_1_9"/>
<dbReference type="GO" id="GO:0005737">
    <property type="term" value="C:cytoplasm"/>
    <property type="evidence" value="ECO:0007669"/>
    <property type="project" value="UniProtKB-SubCell"/>
</dbReference>
<dbReference type="GO" id="GO:0009318">
    <property type="term" value="C:exodeoxyribonuclease VII complex"/>
    <property type="evidence" value="ECO:0007669"/>
    <property type="project" value="InterPro"/>
</dbReference>
<dbReference type="GO" id="GO:0008855">
    <property type="term" value="F:exodeoxyribonuclease VII activity"/>
    <property type="evidence" value="ECO:0007669"/>
    <property type="project" value="UniProtKB-UniRule"/>
</dbReference>
<dbReference type="GO" id="GO:0003676">
    <property type="term" value="F:nucleic acid binding"/>
    <property type="evidence" value="ECO:0007669"/>
    <property type="project" value="InterPro"/>
</dbReference>
<dbReference type="GO" id="GO:0006308">
    <property type="term" value="P:DNA catabolic process"/>
    <property type="evidence" value="ECO:0007669"/>
    <property type="project" value="UniProtKB-UniRule"/>
</dbReference>
<dbReference type="CDD" id="cd04489">
    <property type="entry name" value="ExoVII_LU_OBF"/>
    <property type="match status" value="1"/>
</dbReference>
<dbReference type="HAMAP" id="MF_00378">
    <property type="entry name" value="Exonuc_7_L"/>
    <property type="match status" value="1"/>
</dbReference>
<dbReference type="InterPro" id="IPR003753">
    <property type="entry name" value="Exonuc_VII_L"/>
</dbReference>
<dbReference type="InterPro" id="IPR020579">
    <property type="entry name" value="Exonuc_VII_lsu_C"/>
</dbReference>
<dbReference type="InterPro" id="IPR025824">
    <property type="entry name" value="OB-fold_nuc-bd_dom"/>
</dbReference>
<dbReference type="NCBIfam" id="TIGR00237">
    <property type="entry name" value="xseA"/>
    <property type="match status" value="1"/>
</dbReference>
<dbReference type="PANTHER" id="PTHR30008">
    <property type="entry name" value="EXODEOXYRIBONUCLEASE 7 LARGE SUBUNIT"/>
    <property type="match status" value="1"/>
</dbReference>
<dbReference type="PANTHER" id="PTHR30008:SF0">
    <property type="entry name" value="EXODEOXYRIBONUCLEASE 7 LARGE SUBUNIT"/>
    <property type="match status" value="1"/>
</dbReference>
<dbReference type="Pfam" id="PF02601">
    <property type="entry name" value="Exonuc_VII_L"/>
    <property type="match status" value="1"/>
</dbReference>
<dbReference type="Pfam" id="PF13742">
    <property type="entry name" value="tRNA_anti_2"/>
    <property type="match status" value="1"/>
</dbReference>
<evidence type="ECO:0000255" key="1">
    <source>
        <dbReference type="HAMAP-Rule" id="MF_00378"/>
    </source>
</evidence>
<protein>
    <recommendedName>
        <fullName evidence="1">Exodeoxyribonuclease 7 large subunit</fullName>
        <ecNumber evidence="1">3.1.11.6</ecNumber>
    </recommendedName>
    <alternativeName>
        <fullName evidence="1">Exodeoxyribonuclease VII large subunit</fullName>
        <shortName evidence="1">Exonuclease VII large subunit</shortName>
    </alternativeName>
</protein>
<accession>A2RDN0</accession>
<sequence length="446" mass="50553">MADYLTVTHLTKYLKLKFDRDPYLERVYLTGQVSNFRKRPTHQYFSLKDESAVIQATMWAGVYKKLGFDLEEGMKINVIGRVQLYEPSGSYSIVIEKAEPDGIGALALQFEQLKKKLTAEGYFEQKHKQPLPQFVSKIGVITSPSGAVIRDIITTVSRRFPGVEILLFPTKVQGDGAAQEVVANIRRANQREDLDLLIVGRGGGSIEDLWAFNEEIVVQAIFESQLPVISSVGHETDTTLADFVADRRAATPTAAAELATPITKTDLMSWIVERQNRSYQACLRRIKQRQEWVDKLSQSVIFRQPERLYDAYLQKIDRLSMTLMNTMKDRLSSAKENKVQLDHALANSQLQTKIERYQDRVATAKRLLMANMARQYDSQLARFEKAQDALLSLDVSRIIARGYAMIEKNQALVASVSQITKGDQLTIKMRDGQLDVEVKDVKNENI</sequence>
<gene>
    <name evidence="1" type="primary">xseA</name>
    <name type="ordered locus">SpyM50620</name>
</gene>
<keyword id="KW-0963">Cytoplasm</keyword>
<keyword id="KW-0269">Exonuclease</keyword>
<keyword id="KW-0378">Hydrolase</keyword>
<keyword id="KW-0540">Nuclease</keyword>
<reference key="1">
    <citation type="journal article" date="2007" name="J. Bacteriol.">
        <title>Complete genome of acute rheumatic fever-associated serotype M5 Streptococcus pyogenes strain Manfredo.</title>
        <authorList>
            <person name="Holden M.T.G."/>
            <person name="Scott A."/>
            <person name="Cherevach I."/>
            <person name="Chillingworth T."/>
            <person name="Churcher C."/>
            <person name="Cronin A."/>
            <person name="Dowd L."/>
            <person name="Feltwell T."/>
            <person name="Hamlin N."/>
            <person name="Holroyd S."/>
            <person name="Jagels K."/>
            <person name="Moule S."/>
            <person name="Mungall K."/>
            <person name="Quail M.A."/>
            <person name="Price C."/>
            <person name="Rabbinowitsch E."/>
            <person name="Sharp S."/>
            <person name="Skelton J."/>
            <person name="Whitehead S."/>
            <person name="Barrell B.G."/>
            <person name="Kehoe M."/>
            <person name="Parkhill J."/>
        </authorList>
    </citation>
    <scope>NUCLEOTIDE SEQUENCE [LARGE SCALE GENOMIC DNA]</scope>
    <source>
        <strain>Manfredo</strain>
    </source>
</reference>
<name>EX7L_STRPG</name>
<feature type="chain" id="PRO_0000303822" description="Exodeoxyribonuclease 7 large subunit">
    <location>
        <begin position="1"/>
        <end position="446"/>
    </location>
</feature>
<comment type="function">
    <text evidence="1">Bidirectionally degrades single-stranded DNA into large acid-insoluble oligonucleotides, which are then degraded further into small acid-soluble oligonucleotides.</text>
</comment>
<comment type="catalytic activity">
    <reaction evidence="1">
        <text>Exonucleolytic cleavage in either 5'- to 3'- or 3'- to 5'-direction to yield nucleoside 5'-phosphates.</text>
        <dbReference type="EC" id="3.1.11.6"/>
    </reaction>
</comment>
<comment type="subunit">
    <text evidence="1">Heterooligomer composed of large and small subunits.</text>
</comment>
<comment type="subcellular location">
    <subcellularLocation>
        <location evidence="1">Cytoplasm</location>
    </subcellularLocation>
</comment>
<comment type="similarity">
    <text evidence="1">Belongs to the XseA family.</text>
</comment>
<organism>
    <name type="scientific">Streptococcus pyogenes serotype M5 (strain Manfredo)</name>
    <dbReference type="NCBI Taxonomy" id="160491"/>
    <lineage>
        <taxon>Bacteria</taxon>
        <taxon>Bacillati</taxon>
        <taxon>Bacillota</taxon>
        <taxon>Bacilli</taxon>
        <taxon>Lactobacillales</taxon>
        <taxon>Streptococcaceae</taxon>
        <taxon>Streptococcus</taxon>
    </lineage>
</organism>